<proteinExistence type="evidence at transcript level"/>
<accession>Q949U2</accession>
<accession>Q8LFN4</accession>
<accession>Q9LSH8</accession>
<evidence type="ECO:0000255" key="1">
    <source>
        <dbReference type="PROSITE-ProRule" id="PRU00625"/>
    </source>
</evidence>
<evidence type="ECO:0000256" key="2">
    <source>
        <dbReference type="SAM" id="MobiDB-lite"/>
    </source>
</evidence>
<evidence type="ECO:0000305" key="3"/>
<evidence type="ECO:0000312" key="4">
    <source>
        <dbReference type="Araport" id="AT3G13040"/>
    </source>
</evidence>
<evidence type="ECO:0000312" key="5">
    <source>
        <dbReference type="EMBL" id="AAK92826.1"/>
    </source>
</evidence>
<evidence type="ECO:0000312" key="6">
    <source>
        <dbReference type="EMBL" id="BAB02514.1"/>
    </source>
</evidence>
<protein>
    <recommendedName>
        <fullName evidence="3">Myb family transcription factor PHL6</fullName>
    </recommendedName>
    <alternativeName>
        <fullName evidence="3">Protein PHR1-LIKE 6</fullName>
    </alternativeName>
</protein>
<sequence>MYIKAIMNRHRLLSAATDECNKKLGQACSSSLSPVHNFLNVQPEHRKTPFIRSQSPDSPGQLWPKNSSQSTFSRSSTFCTNLYLSSSSTSETQKHLGNSLPFLPDPSSYTHSASGVESARSPSIFTEDLGNQCDGGNSGSLLKDFLNLSGDACSDGDFHDFGCSNDSYCLSDQMELQFLSDELELAITDRAETPRLDEIYETPLASNPVTRLSPSQSCVPGAMSVDVVSSHPSPGSAANQKSRMRWTPELHESFVKAVIKLEGPEKATPKAVKKLMNVEGLTIYHVKSHLQKYRLAKYMPEKKEEKRTDNSEEKKLALSKSEADEKKKGAIQLTEALRMQMEVQKQLHEQLEVQRVLQLRIEEHAKYLEKMLEEQRKTGRWISSSSQTVLSPSDDSIPDSQNMSKTKASSPQPPLPAENKASETEDDKCESPQKRRRLENIAESEDPKR</sequence>
<organism evidence="5">
    <name type="scientific">Arabidopsis thaliana</name>
    <name type="common">Mouse-ear cress</name>
    <dbReference type="NCBI Taxonomy" id="3702"/>
    <lineage>
        <taxon>Eukaryota</taxon>
        <taxon>Viridiplantae</taxon>
        <taxon>Streptophyta</taxon>
        <taxon>Embryophyta</taxon>
        <taxon>Tracheophyta</taxon>
        <taxon>Spermatophyta</taxon>
        <taxon>Magnoliopsida</taxon>
        <taxon>eudicotyledons</taxon>
        <taxon>Gunneridae</taxon>
        <taxon>Pentapetalae</taxon>
        <taxon>rosids</taxon>
        <taxon>malvids</taxon>
        <taxon>Brassicales</taxon>
        <taxon>Brassicaceae</taxon>
        <taxon>Camelineae</taxon>
        <taxon>Arabidopsis</taxon>
    </lineage>
</organism>
<keyword id="KW-0175">Coiled coil</keyword>
<keyword id="KW-0238">DNA-binding</keyword>
<keyword id="KW-0539">Nucleus</keyword>
<keyword id="KW-1185">Reference proteome</keyword>
<keyword id="KW-0804">Transcription</keyword>
<keyword id="KW-0805">Transcription regulation</keyword>
<dbReference type="EMBL" id="AB026645">
    <property type="protein sequence ID" value="BAB02514.1"/>
    <property type="status" value="ALT_SEQ"/>
    <property type="molecule type" value="Genomic_DNA"/>
</dbReference>
<dbReference type="EMBL" id="CP002686">
    <property type="protein sequence ID" value="AEE75281.1"/>
    <property type="molecule type" value="Genomic_DNA"/>
</dbReference>
<dbReference type="EMBL" id="CP002686">
    <property type="protein sequence ID" value="AEE75282.1"/>
    <property type="molecule type" value="Genomic_DNA"/>
</dbReference>
<dbReference type="EMBL" id="CP002686">
    <property type="protein sequence ID" value="ANM65836.1"/>
    <property type="molecule type" value="Genomic_DNA"/>
</dbReference>
<dbReference type="EMBL" id="AY050889">
    <property type="protein sequence ID" value="AAK92826.1"/>
    <property type="molecule type" value="mRNA"/>
</dbReference>
<dbReference type="EMBL" id="AY096674">
    <property type="protein sequence ID" value="AAM20308.1"/>
    <property type="molecule type" value="mRNA"/>
</dbReference>
<dbReference type="EMBL" id="AY084738">
    <property type="protein sequence ID" value="AAM61311.1"/>
    <property type="status" value="ALT_INIT"/>
    <property type="molecule type" value="mRNA"/>
</dbReference>
<dbReference type="RefSeq" id="NP_001319536.1">
    <property type="nucleotide sequence ID" value="NM_001338022.1"/>
</dbReference>
<dbReference type="RefSeq" id="NP_566442.1">
    <property type="nucleotide sequence ID" value="NM_112141.3"/>
</dbReference>
<dbReference type="RefSeq" id="NP_974298.1">
    <property type="nucleotide sequence ID" value="NM_202569.1"/>
</dbReference>
<dbReference type="SMR" id="Q949U2"/>
<dbReference type="FunCoup" id="Q949U2">
    <property type="interactions" value="189"/>
</dbReference>
<dbReference type="IntAct" id="Q949U2">
    <property type="interactions" value="3"/>
</dbReference>
<dbReference type="STRING" id="3702.Q949U2"/>
<dbReference type="iPTMnet" id="Q949U2"/>
<dbReference type="PaxDb" id="3702-AT3G13040.1"/>
<dbReference type="ProteomicsDB" id="236349"/>
<dbReference type="EnsemblPlants" id="AT3G13040.1">
    <property type="protein sequence ID" value="AT3G13040.1"/>
    <property type="gene ID" value="AT3G13040"/>
</dbReference>
<dbReference type="EnsemblPlants" id="AT3G13040.2">
    <property type="protein sequence ID" value="AT3G13040.2"/>
    <property type="gene ID" value="AT3G13040"/>
</dbReference>
<dbReference type="EnsemblPlants" id="AT3G13040.3">
    <property type="protein sequence ID" value="AT3G13040.3"/>
    <property type="gene ID" value="AT3G13040"/>
</dbReference>
<dbReference type="GeneID" id="820490"/>
<dbReference type="Gramene" id="AT3G13040.1">
    <property type="protein sequence ID" value="AT3G13040.1"/>
    <property type="gene ID" value="AT3G13040"/>
</dbReference>
<dbReference type="Gramene" id="AT3G13040.2">
    <property type="protein sequence ID" value="AT3G13040.2"/>
    <property type="gene ID" value="AT3G13040"/>
</dbReference>
<dbReference type="Gramene" id="AT3G13040.3">
    <property type="protein sequence ID" value="AT3G13040.3"/>
    <property type="gene ID" value="AT3G13040"/>
</dbReference>
<dbReference type="KEGG" id="ath:AT3G13040"/>
<dbReference type="Araport" id="AT3G13040"/>
<dbReference type="TAIR" id="AT3G13040">
    <property type="gene designation" value="GAMMAMYB2"/>
</dbReference>
<dbReference type="eggNOG" id="ENOG502QSXE">
    <property type="taxonomic scope" value="Eukaryota"/>
</dbReference>
<dbReference type="HOGENOM" id="CLU_045049_0_0_1"/>
<dbReference type="InParanoid" id="Q949U2"/>
<dbReference type="OMA" id="NQYDDEQ"/>
<dbReference type="OrthoDB" id="551907at2759"/>
<dbReference type="PRO" id="PR:Q949U2"/>
<dbReference type="Proteomes" id="UP000006548">
    <property type="component" value="Chromosome 3"/>
</dbReference>
<dbReference type="ExpressionAtlas" id="Q949U2">
    <property type="expression patterns" value="baseline and differential"/>
</dbReference>
<dbReference type="GO" id="GO:0005634">
    <property type="term" value="C:nucleus"/>
    <property type="evidence" value="ECO:0007669"/>
    <property type="project" value="UniProtKB-SubCell"/>
</dbReference>
<dbReference type="GO" id="GO:0003677">
    <property type="term" value="F:DNA binding"/>
    <property type="evidence" value="ECO:0007669"/>
    <property type="project" value="UniProtKB-KW"/>
</dbReference>
<dbReference type="GO" id="GO:0003700">
    <property type="term" value="F:DNA-binding transcription factor activity"/>
    <property type="evidence" value="ECO:0000250"/>
    <property type="project" value="TAIR"/>
</dbReference>
<dbReference type="GO" id="GO:0006355">
    <property type="term" value="P:regulation of DNA-templated transcription"/>
    <property type="evidence" value="ECO:0000304"/>
    <property type="project" value="TAIR"/>
</dbReference>
<dbReference type="FunFam" id="1.10.10.60:FF:000002">
    <property type="entry name" value="Myb family transcription factor"/>
    <property type="match status" value="1"/>
</dbReference>
<dbReference type="Gene3D" id="1.10.10.60">
    <property type="entry name" value="Homeodomain-like"/>
    <property type="match status" value="1"/>
</dbReference>
<dbReference type="InterPro" id="IPR009057">
    <property type="entry name" value="Homeodomain-like_sf"/>
</dbReference>
<dbReference type="InterPro" id="IPR025756">
    <property type="entry name" value="Myb_CC_LHEQLE"/>
</dbReference>
<dbReference type="InterPro" id="IPR017930">
    <property type="entry name" value="Myb_dom"/>
</dbReference>
<dbReference type="InterPro" id="IPR006447">
    <property type="entry name" value="Myb_dom_plants"/>
</dbReference>
<dbReference type="InterPro" id="IPR046955">
    <property type="entry name" value="PHR1-like"/>
</dbReference>
<dbReference type="InterPro" id="IPR001005">
    <property type="entry name" value="SANT/Myb"/>
</dbReference>
<dbReference type="NCBIfam" id="TIGR01557">
    <property type="entry name" value="myb_SHAQKYF"/>
    <property type="match status" value="1"/>
</dbReference>
<dbReference type="PANTHER" id="PTHR31499:SF80">
    <property type="entry name" value="HTH MYB-TYPE DOMAIN-CONTAINING PROTEIN"/>
    <property type="match status" value="1"/>
</dbReference>
<dbReference type="PANTHER" id="PTHR31499">
    <property type="entry name" value="MYB FAMILY TRANSCRIPTION FACTOR PHL11"/>
    <property type="match status" value="1"/>
</dbReference>
<dbReference type="Pfam" id="PF14379">
    <property type="entry name" value="Myb_CC_LHEQLE"/>
    <property type="match status" value="1"/>
</dbReference>
<dbReference type="Pfam" id="PF00249">
    <property type="entry name" value="Myb_DNA-binding"/>
    <property type="match status" value="1"/>
</dbReference>
<dbReference type="SUPFAM" id="SSF46689">
    <property type="entry name" value="Homeodomain-like"/>
    <property type="match status" value="1"/>
</dbReference>
<dbReference type="PROSITE" id="PS51294">
    <property type="entry name" value="HTH_MYB"/>
    <property type="match status" value="1"/>
</dbReference>
<name>PHL6_ARATH</name>
<reference key="1">
    <citation type="journal article" date="2000" name="DNA Res.">
        <title>Structural analysis of Arabidopsis thaliana chromosome 3. I. Sequence features of the regions of 4,504,864 bp covered by sixty P1 and TAC clones.</title>
        <authorList>
            <person name="Sato S."/>
            <person name="Nakamura Y."/>
            <person name="Kaneko T."/>
            <person name="Katoh T."/>
            <person name="Asamizu E."/>
            <person name="Tabata S."/>
        </authorList>
    </citation>
    <scope>NUCLEOTIDE SEQUENCE [LARGE SCALE GENOMIC DNA]</scope>
    <source>
        <strain>cv. Columbia</strain>
    </source>
</reference>
<reference key="2">
    <citation type="journal article" date="2017" name="Plant J.">
        <title>Araport11: a complete reannotation of the Arabidopsis thaliana reference genome.</title>
        <authorList>
            <person name="Cheng C.Y."/>
            <person name="Krishnakumar V."/>
            <person name="Chan A.P."/>
            <person name="Thibaud-Nissen F."/>
            <person name="Schobel S."/>
            <person name="Town C.D."/>
        </authorList>
    </citation>
    <scope>GENOME REANNOTATION</scope>
    <source>
        <strain>cv. Columbia</strain>
    </source>
</reference>
<reference key="3">
    <citation type="journal article" date="2003" name="Science">
        <title>Empirical analysis of transcriptional activity in the Arabidopsis genome.</title>
        <authorList>
            <person name="Yamada K."/>
            <person name="Lim J."/>
            <person name="Dale J.M."/>
            <person name="Chen H."/>
            <person name="Shinn P."/>
            <person name="Palm C.J."/>
            <person name="Southwick A.M."/>
            <person name="Wu H.C."/>
            <person name="Kim C.J."/>
            <person name="Nguyen M."/>
            <person name="Pham P.K."/>
            <person name="Cheuk R.F."/>
            <person name="Karlin-Newmann G."/>
            <person name="Liu S.X."/>
            <person name="Lam B."/>
            <person name="Sakano H."/>
            <person name="Wu T."/>
            <person name="Yu G."/>
            <person name="Miranda M."/>
            <person name="Quach H.L."/>
            <person name="Tripp M."/>
            <person name="Chang C.H."/>
            <person name="Lee J.M."/>
            <person name="Toriumi M.J."/>
            <person name="Chan M.M."/>
            <person name="Tang C.C."/>
            <person name="Onodera C.S."/>
            <person name="Deng J.M."/>
            <person name="Akiyama K."/>
            <person name="Ansari Y."/>
            <person name="Arakawa T."/>
            <person name="Banh J."/>
            <person name="Banno F."/>
            <person name="Bowser L."/>
            <person name="Brooks S.Y."/>
            <person name="Carninci P."/>
            <person name="Chao Q."/>
            <person name="Choy N."/>
            <person name="Enju A."/>
            <person name="Goldsmith A.D."/>
            <person name="Gurjal M."/>
            <person name="Hansen N.F."/>
            <person name="Hayashizaki Y."/>
            <person name="Johnson-Hopson C."/>
            <person name="Hsuan V.W."/>
            <person name="Iida K."/>
            <person name="Karnes M."/>
            <person name="Khan S."/>
            <person name="Koesema E."/>
            <person name="Ishida J."/>
            <person name="Jiang P.X."/>
            <person name="Jones T."/>
            <person name="Kawai J."/>
            <person name="Kamiya A."/>
            <person name="Meyers C."/>
            <person name="Nakajima M."/>
            <person name="Narusaka M."/>
            <person name="Seki M."/>
            <person name="Sakurai T."/>
            <person name="Satou M."/>
            <person name="Tamse R."/>
            <person name="Vaysberg M."/>
            <person name="Wallender E.K."/>
            <person name="Wong C."/>
            <person name="Yamamura Y."/>
            <person name="Yuan S."/>
            <person name="Shinozaki K."/>
            <person name="Davis R.W."/>
            <person name="Theologis A."/>
            <person name="Ecker J.R."/>
        </authorList>
    </citation>
    <scope>NUCLEOTIDE SEQUENCE [LARGE SCALE MRNA]</scope>
    <source>
        <strain>cv. Columbia</strain>
    </source>
</reference>
<reference key="4">
    <citation type="submission" date="2002-03" db="EMBL/GenBank/DDBJ databases">
        <title>Full-length cDNA from Arabidopsis thaliana.</title>
        <authorList>
            <person name="Brover V.V."/>
            <person name="Troukhan M.E."/>
            <person name="Alexandrov N.A."/>
            <person name="Lu Y.-P."/>
            <person name="Flavell R.B."/>
            <person name="Feldmann K.A."/>
        </authorList>
    </citation>
    <scope>NUCLEOTIDE SEQUENCE [LARGE SCALE MRNA]</scope>
</reference>
<reference key="5">
    <citation type="journal article" date="2001" name="Genes Dev.">
        <title>A conserved MYB transcription factor involved in phosphate starvation signaling both in vascular plants and in unicellular algae.</title>
        <authorList>
            <person name="Rubio V."/>
            <person name="Linhares F."/>
            <person name="Solano R."/>
            <person name="Martin A.C."/>
            <person name="Iglesias J."/>
            <person name="Leyva A."/>
            <person name="Paz-Ares J."/>
        </authorList>
    </citation>
    <scope>GENE FAMILY</scope>
</reference>
<comment type="subcellular location">
    <subcellularLocation>
        <location evidence="1">Nucleus</location>
    </subcellularLocation>
</comment>
<comment type="similarity">
    <text evidence="3">Belongs to the MYB-CC family.</text>
</comment>
<comment type="sequence caution" evidence="3">
    <conflict type="erroneous initiation">
        <sequence resource="EMBL-CDS" id="AAM61311"/>
    </conflict>
    <text>Truncated N-terminus.</text>
</comment>
<comment type="sequence caution" evidence="3">
    <conflict type="erroneous gene model prediction">
        <sequence resource="EMBL-CDS" id="BAB02514"/>
    </conflict>
</comment>
<feature type="chain" id="PRO_0000436863" description="Myb family transcription factor PHL6">
    <location>
        <begin position="1"/>
        <end position="449"/>
    </location>
</feature>
<feature type="domain" description="HTH myb-type" evidence="1">
    <location>
        <begin position="238"/>
        <end position="298"/>
    </location>
</feature>
<feature type="DNA-binding region" description="H-T-H motif" evidence="1">
    <location>
        <begin position="269"/>
        <end position="294"/>
    </location>
</feature>
<feature type="region of interest" description="Disordered" evidence="2">
    <location>
        <begin position="49"/>
        <end position="72"/>
    </location>
</feature>
<feature type="region of interest" description="Disordered" evidence="2">
    <location>
        <begin position="301"/>
        <end position="327"/>
    </location>
</feature>
<feature type="region of interest" description="Coiled coil" evidence="3">
    <location>
        <begin position="334"/>
        <end position="354"/>
    </location>
</feature>
<feature type="region of interest" description="Disordered" evidence="2">
    <location>
        <begin position="376"/>
        <end position="449"/>
    </location>
</feature>
<feature type="short sequence motif" description="LHEQLE" evidence="3">
    <location>
        <begin position="347"/>
        <end position="352"/>
    </location>
</feature>
<feature type="compositionally biased region" description="Polar residues" evidence="2">
    <location>
        <begin position="381"/>
        <end position="410"/>
    </location>
</feature>
<feature type="sequence conflict" description="In Ref. 4; AAM61311." evidence="3" ref="4">
    <original>L</original>
    <variation>Q</variation>
    <location>
        <position position="351"/>
    </location>
</feature>
<gene>
    <name evidence="3" type="primary">PHL6</name>
    <name evidence="4" type="ordered locus">At3g13040</name>
    <name evidence="6" type="ORF">MGH6.22</name>
</gene>